<reference key="1">
    <citation type="journal article" date="2007" name="Curr. Biol.">
        <title>Reduced genome of the thioautotrophic intracellular symbiont in a deep-sea clam, Calyptogena okutanii.</title>
        <authorList>
            <person name="Kuwahara H."/>
            <person name="Yoshida T."/>
            <person name="Takaki Y."/>
            <person name="Shimamura S."/>
            <person name="Nishi S."/>
            <person name="Harada M."/>
            <person name="Matsuyama K."/>
            <person name="Takishita K."/>
            <person name="Kawato M."/>
            <person name="Uematsu K."/>
            <person name="Fujiwara Y."/>
            <person name="Sato T."/>
            <person name="Kato C."/>
            <person name="Kitagawa M."/>
            <person name="Kato I."/>
            <person name="Maruyama T."/>
        </authorList>
    </citation>
    <scope>NUCLEOTIDE SEQUENCE [LARGE SCALE GENOMIC DNA]</scope>
    <source>
        <strain>HA</strain>
    </source>
</reference>
<protein>
    <recommendedName>
        <fullName evidence="1">Phosphoserine aminotransferase</fullName>
        <ecNumber evidence="1">2.6.1.52</ecNumber>
    </recommendedName>
    <alternativeName>
        <fullName evidence="1">Phosphohydroxythreonine aminotransferase</fullName>
        <shortName evidence="1">PSAT</shortName>
    </alternativeName>
</protein>
<organism>
    <name type="scientific">Vesicomyosocius okutanii subsp. Calyptogena okutanii (strain HA)</name>
    <dbReference type="NCBI Taxonomy" id="412965"/>
    <lineage>
        <taxon>Bacteria</taxon>
        <taxon>Pseudomonadati</taxon>
        <taxon>Pseudomonadota</taxon>
        <taxon>Gammaproteobacteria</taxon>
        <taxon>Candidatus Pseudothioglobaceae</taxon>
        <taxon>Candidatus Vesicomyosocius</taxon>
    </lineage>
</organism>
<evidence type="ECO:0000255" key="1">
    <source>
        <dbReference type="HAMAP-Rule" id="MF_00160"/>
    </source>
</evidence>
<accession>A5CWI0</accession>
<feature type="chain" id="PRO_1000203583" description="Phosphoserine aminotransferase">
    <location>
        <begin position="1"/>
        <end position="359"/>
    </location>
</feature>
<feature type="binding site" evidence="1">
    <location>
        <position position="42"/>
    </location>
    <ligand>
        <name>L-glutamate</name>
        <dbReference type="ChEBI" id="CHEBI:29985"/>
    </ligand>
</feature>
<feature type="binding site" evidence="1">
    <location>
        <begin position="76"/>
        <end position="77"/>
    </location>
    <ligand>
        <name>pyridoxal 5'-phosphate</name>
        <dbReference type="ChEBI" id="CHEBI:597326"/>
    </ligand>
</feature>
<feature type="binding site" evidence="1">
    <location>
        <position position="102"/>
    </location>
    <ligand>
        <name>pyridoxal 5'-phosphate</name>
        <dbReference type="ChEBI" id="CHEBI:597326"/>
    </ligand>
</feature>
<feature type="binding site" evidence="1">
    <location>
        <position position="152"/>
    </location>
    <ligand>
        <name>pyridoxal 5'-phosphate</name>
        <dbReference type="ChEBI" id="CHEBI:597326"/>
    </ligand>
</feature>
<feature type="binding site" evidence="1">
    <location>
        <position position="171"/>
    </location>
    <ligand>
        <name>pyridoxal 5'-phosphate</name>
        <dbReference type="ChEBI" id="CHEBI:597326"/>
    </ligand>
</feature>
<feature type="binding site" evidence="1">
    <location>
        <position position="194"/>
    </location>
    <ligand>
        <name>pyridoxal 5'-phosphate</name>
        <dbReference type="ChEBI" id="CHEBI:597326"/>
    </ligand>
</feature>
<feature type="binding site" evidence="1">
    <location>
        <begin position="236"/>
        <end position="237"/>
    </location>
    <ligand>
        <name>pyridoxal 5'-phosphate</name>
        <dbReference type="ChEBI" id="CHEBI:597326"/>
    </ligand>
</feature>
<feature type="modified residue" description="N6-(pyridoxal phosphate)lysine" evidence="1">
    <location>
        <position position="195"/>
    </location>
</feature>
<comment type="function">
    <text evidence="1">Catalyzes the reversible conversion of 3-phosphohydroxypyruvate to phosphoserine and of 3-hydroxy-2-oxo-4-phosphonooxybutanoate to phosphohydroxythreonine.</text>
</comment>
<comment type="catalytic activity">
    <reaction evidence="1">
        <text>O-phospho-L-serine + 2-oxoglutarate = 3-phosphooxypyruvate + L-glutamate</text>
        <dbReference type="Rhea" id="RHEA:14329"/>
        <dbReference type="ChEBI" id="CHEBI:16810"/>
        <dbReference type="ChEBI" id="CHEBI:18110"/>
        <dbReference type="ChEBI" id="CHEBI:29985"/>
        <dbReference type="ChEBI" id="CHEBI:57524"/>
        <dbReference type="EC" id="2.6.1.52"/>
    </reaction>
</comment>
<comment type="catalytic activity">
    <reaction evidence="1">
        <text>4-(phosphooxy)-L-threonine + 2-oxoglutarate = (R)-3-hydroxy-2-oxo-4-phosphooxybutanoate + L-glutamate</text>
        <dbReference type="Rhea" id="RHEA:16573"/>
        <dbReference type="ChEBI" id="CHEBI:16810"/>
        <dbReference type="ChEBI" id="CHEBI:29985"/>
        <dbReference type="ChEBI" id="CHEBI:58452"/>
        <dbReference type="ChEBI" id="CHEBI:58538"/>
        <dbReference type="EC" id="2.6.1.52"/>
    </reaction>
</comment>
<comment type="cofactor">
    <cofactor evidence="1">
        <name>pyridoxal 5'-phosphate</name>
        <dbReference type="ChEBI" id="CHEBI:597326"/>
    </cofactor>
    <text evidence="1">Binds 1 pyridoxal phosphate per subunit.</text>
</comment>
<comment type="pathway">
    <text evidence="1">Amino-acid biosynthesis; L-serine biosynthesis; L-serine from 3-phospho-D-glycerate: step 2/3.</text>
</comment>
<comment type="pathway">
    <text evidence="1">Cofactor biosynthesis; pyridoxine 5'-phosphate biosynthesis; pyridoxine 5'-phosphate from D-erythrose 4-phosphate: step 3/5.</text>
</comment>
<comment type="subunit">
    <text evidence="1">Homodimer.</text>
</comment>
<comment type="subcellular location">
    <subcellularLocation>
        <location evidence="1">Cytoplasm</location>
    </subcellularLocation>
</comment>
<comment type="similarity">
    <text evidence="1">Belongs to the class-V pyridoxal-phosphate-dependent aminotransferase family. SerC subfamily.</text>
</comment>
<proteinExistence type="inferred from homology"/>
<sequence>MSQVYNFSAGPAMLPIQVLRQMQDELLEYEDVKASIMEISHRSTDFIAMAQKSEQDLRDLMNIPNHYKVLFLQGGASAQFSMVPINLLHGKTKANYAYTGHWSKKAIVEGSRYCDVNICTNSSDNKYTDIDVFENWDIDPDGAYLHYTPNETIAGLEFDYVPEVDMPLVADMSSSILSREVDVSKYGVIYAGAQKNIGIAGLTVVIVREDLMGSVVANQPILFDYTIQAKNDSMYNTPSTYSWYVASRVFEWLKQQGGLSVIAKINQTKAKTLYDVIDGSNFYSNPVALKYRSWMNVPFLLADENLNGLFVEKAAINNLITLKGHRSVGGMRASIYNAMPQKGINELINFMKVFEKENS</sequence>
<dbReference type="EC" id="2.6.1.52" evidence="1"/>
<dbReference type="EMBL" id="AP009247">
    <property type="protein sequence ID" value="BAF61697.1"/>
    <property type="molecule type" value="Genomic_DNA"/>
</dbReference>
<dbReference type="RefSeq" id="WP_011929967.1">
    <property type="nucleotide sequence ID" value="NC_009465.1"/>
</dbReference>
<dbReference type="SMR" id="A5CWI0"/>
<dbReference type="STRING" id="412965.COSY_0581"/>
<dbReference type="KEGG" id="vok:COSY_0581"/>
<dbReference type="eggNOG" id="COG1932">
    <property type="taxonomic scope" value="Bacteria"/>
</dbReference>
<dbReference type="HOGENOM" id="CLU_034866_0_2_6"/>
<dbReference type="OrthoDB" id="9809412at2"/>
<dbReference type="UniPathway" id="UPA00135">
    <property type="reaction ID" value="UER00197"/>
</dbReference>
<dbReference type="UniPathway" id="UPA00244">
    <property type="reaction ID" value="UER00311"/>
</dbReference>
<dbReference type="Proteomes" id="UP000000247">
    <property type="component" value="Chromosome"/>
</dbReference>
<dbReference type="GO" id="GO:0005737">
    <property type="term" value="C:cytoplasm"/>
    <property type="evidence" value="ECO:0007669"/>
    <property type="project" value="UniProtKB-SubCell"/>
</dbReference>
<dbReference type="GO" id="GO:0004648">
    <property type="term" value="F:O-phospho-L-serine:2-oxoglutarate aminotransferase activity"/>
    <property type="evidence" value="ECO:0007669"/>
    <property type="project" value="UniProtKB-UniRule"/>
</dbReference>
<dbReference type="GO" id="GO:0030170">
    <property type="term" value="F:pyridoxal phosphate binding"/>
    <property type="evidence" value="ECO:0007669"/>
    <property type="project" value="UniProtKB-UniRule"/>
</dbReference>
<dbReference type="GO" id="GO:0006564">
    <property type="term" value="P:L-serine biosynthetic process"/>
    <property type="evidence" value="ECO:0007669"/>
    <property type="project" value="UniProtKB-UniRule"/>
</dbReference>
<dbReference type="GO" id="GO:0008615">
    <property type="term" value="P:pyridoxine biosynthetic process"/>
    <property type="evidence" value="ECO:0007669"/>
    <property type="project" value="UniProtKB-UniRule"/>
</dbReference>
<dbReference type="FunFam" id="3.40.640.10:FF:000010">
    <property type="entry name" value="Phosphoserine aminotransferase"/>
    <property type="match status" value="1"/>
</dbReference>
<dbReference type="FunFam" id="3.90.1150.10:FF:000006">
    <property type="entry name" value="Phosphoserine aminotransferase"/>
    <property type="match status" value="1"/>
</dbReference>
<dbReference type="Gene3D" id="3.90.1150.10">
    <property type="entry name" value="Aspartate Aminotransferase, domain 1"/>
    <property type="match status" value="1"/>
</dbReference>
<dbReference type="Gene3D" id="3.40.640.10">
    <property type="entry name" value="Type I PLP-dependent aspartate aminotransferase-like (Major domain)"/>
    <property type="match status" value="1"/>
</dbReference>
<dbReference type="HAMAP" id="MF_00160">
    <property type="entry name" value="SerC_aminotrans_5"/>
    <property type="match status" value="1"/>
</dbReference>
<dbReference type="InterPro" id="IPR000192">
    <property type="entry name" value="Aminotrans_V_dom"/>
</dbReference>
<dbReference type="InterPro" id="IPR020578">
    <property type="entry name" value="Aminotrans_V_PyrdxlP_BS"/>
</dbReference>
<dbReference type="InterPro" id="IPR022278">
    <property type="entry name" value="Pser_aminoTfrase"/>
</dbReference>
<dbReference type="InterPro" id="IPR015424">
    <property type="entry name" value="PyrdxlP-dep_Trfase"/>
</dbReference>
<dbReference type="InterPro" id="IPR015421">
    <property type="entry name" value="PyrdxlP-dep_Trfase_major"/>
</dbReference>
<dbReference type="InterPro" id="IPR015422">
    <property type="entry name" value="PyrdxlP-dep_Trfase_small"/>
</dbReference>
<dbReference type="NCBIfam" id="NF003764">
    <property type="entry name" value="PRK05355.1"/>
    <property type="match status" value="1"/>
</dbReference>
<dbReference type="NCBIfam" id="TIGR01364">
    <property type="entry name" value="serC_1"/>
    <property type="match status" value="1"/>
</dbReference>
<dbReference type="PANTHER" id="PTHR43247">
    <property type="entry name" value="PHOSPHOSERINE AMINOTRANSFERASE"/>
    <property type="match status" value="1"/>
</dbReference>
<dbReference type="PANTHER" id="PTHR43247:SF1">
    <property type="entry name" value="PHOSPHOSERINE AMINOTRANSFERASE"/>
    <property type="match status" value="1"/>
</dbReference>
<dbReference type="Pfam" id="PF00266">
    <property type="entry name" value="Aminotran_5"/>
    <property type="match status" value="1"/>
</dbReference>
<dbReference type="PIRSF" id="PIRSF000525">
    <property type="entry name" value="SerC"/>
    <property type="match status" value="1"/>
</dbReference>
<dbReference type="SUPFAM" id="SSF53383">
    <property type="entry name" value="PLP-dependent transferases"/>
    <property type="match status" value="1"/>
</dbReference>
<dbReference type="PROSITE" id="PS00595">
    <property type="entry name" value="AA_TRANSFER_CLASS_5"/>
    <property type="match status" value="1"/>
</dbReference>
<gene>
    <name evidence="1" type="primary">serC</name>
    <name type="ordered locus">COSY_0581</name>
</gene>
<name>SERC_VESOH</name>
<keyword id="KW-0028">Amino-acid biosynthesis</keyword>
<keyword id="KW-0032">Aminotransferase</keyword>
<keyword id="KW-0963">Cytoplasm</keyword>
<keyword id="KW-0663">Pyridoxal phosphate</keyword>
<keyword id="KW-0664">Pyridoxine biosynthesis</keyword>
<keyword id="KW-1185">Reference proteome</keyword>
<keyword id="KW-0718">Serine biosynthesis</keyword>
<keyword id="KW-0808">Transferase</keyword>